<organism>
    <name type="scientific">Sulfurisphaera tokodaii (strain DSM 16993 / JCM 10545 / NBRC 100140 / 7)</name>
    <name type="common">Sulfolobus tokodaii</name>
    <dbReference type="NCBI Taxonomy" id="273063"/>
    <lineage>
        <taxon>Archaea</taxon>
        <taxon>Thermoproteota</taxon>
        <taxon>Thermoprotei</taxon>
        <taxon>Sulfolobales</taxon>
        <taxon>Sulfolobaceae</taxon>
        <taxon>Sulfurisphaera</taxon>
    </lineage>
</organism>
<feature type="chain" id="PRO_0000147281" description="Dihydroorotase">
    <location>
        <begin position="1"/>
        <end position="389"/>
    </location>
</feature>
<feature type="active site" evidence="1">
    <location>
        <position position="254"/>
    </location>
</feature>
<feature type="binding site" evidence="1">
    <location>
        <position position="51"/>
    </location>
    <ligand>
        <name>Zn(2+)</name>
        <dbReference type="ChEBI" id="CHEBI:29105"/>
        <label>1</label>
    </ligand>
</feature>
<feature type="binding site" evidence="1">
    <location>
        <begin position="53"/>
        <end position="55"/>
    </location>
    <ligand>
        <name>substrate</name>
    </ligand>
</feature>
<feature type="binding site" evidence="1">
    <location>
        <position position="53"/>
    </location>
    <ligand>
        <name>Zn(2+)</name>
        <dbReference type="ChEBI" id="CHEBI:29105"/>
        <label>1</label>
    </ligand>
</feature>
<feature type="binding site" evidence="1">
    <location>
        <position position="85"/>
    </location>
    <ligand>
        <name>substrate</name>
    </ligand>
</feature>
<feature type="binding site" evidence="1">
    <location>
        <position position="133"/>
    </location>
    <ligand>
        <name>Zn(2+)</name>
        <dbReference type="ChEBI" id="CHEBI:29105"/>
        <label>1</label>
    </ligand>
</feature>
<feature type="binding site" evidence="1">
    <location>
        <position position="133"/>
    </location>
    <ligand>
        <name>Zn(2+)</name>
        <dbReference type="ChEBI" id="CHEBI:29105"/>
        <label>2</label>
    </ligand>
</feature>
<feature type="binding site" evidence="1">
    <location>
        <position position="158"/>
    </location>
    <ligand>
        <name>Zn(2+)</name>
        <dbReference type="ChEBI" id="CHEBI:29105"/>
        <label>2</label>
    </ligand>
</feature>
<feature type="binding site" evidence="1">
    <location>
        <position position="192"/>
    </location>
    <ligand>
        <name>Zn(2+)</name>
        <dbReference type="ChEBI" id="CHEBI:29105"/>
        <label>2</label>
    </ligand>
</feature>
<feature type="binding site" evidence="1">
    <location>
        <position position="254"/>
    </location>
    <ligand>
        <name>Zn(2+)</name>
        <dbReference type="ChEBI" id="CHEBI:29105"/>
        <label>1</label>
    </ligand>
</feature>
<feature type="binding site" evidence="1">
    <location>
        <position position="258"/>
    </location>
    <ligand>
        <name>substrate</name>
    </ligand>
</feature>
<feature type="binding site" evidence="1">
    <location>
        <begin position="272"/>
        <end position="273"/>
    </location>
    <ligand>
        <name>substrate</name>
    </ligand>
</feature>
<feature type="modified residue" description="N6-carboxylysine" evidence="1">
    <location>
        <position position="133"/>
    </location>
</feature>
<reference key="1">
    <citation type="journal article" date="2001" name="DNA Res.">
        <title>Complete genome sequence of an aerobic thermoacidophilic Crenarchaeon, Sulfolobus tokodaii strain7.</title>
        <authorList>
            <person name="Kawarabayasi Y."/>
            <person name="Hino Y."/>
            <person name="Horikawa H."/>
            <person name="Jin-no K."/>
            <person name="Takahashi M."/>
            <person name="Sekine M."/>
            <person name="Baba S."/>
            <person name="Ankai A."/>
            <person name="Kosugi H."/>
            <person name="Hosoyama A."/>
            <person name="Fukui S."/>
            <person name="Nagai Y."/>
            <person name="Nishijima K."/>
            <person name="Otsuka R."/>
            <person name="Nakazawa H."/>
            <person name="Takamiya M."/>
            <person name="Kato Y."/>
            <person name="Yoshizawa T."/>
            <person name="Tanaka T."/>
            <person name="Kudoh Y."/>
            <person name="Yamazaki J."/>
            <person name="Kushida N."/>
            <person name="Oguchi A."/>
            <person name="Aoki K."/>
            <person name="Masuda S."/>
            <person name="Yanagii M."/>
            <person name="Nishimura M."/>
            <person name="Yamagishi A."/>
            <person name="Oshima T."/>
            <person name="Kikuchi H."/>
        </authorList>
    </citation>
    <scope>NUCLEOTIDE SEQUENCE [LARGE SCALE GENOMIC DNA]</scope>
    <source>
        <strain>DSM 16993 / JCM 10545 / NBRC 100140 / 7</strain>
    </source>
</reference>
<comment type="function">
    <text evidence="1">Catalyzes the reversible cyclization of carbamoyl aspartate to dihydroorotate.</text>
</comment>
<comment type="catalytic activity">
    <reaction evidence="1">
        <text>(S)-dihydroorotate + H2O = N-carbamoyl-L-aspartate + H(+)</text>
        <dbReference type="Rhea" id="RHEA:24296"/>
        <dbReference type="ChEBI" id="CHEBI:15377"/>
        <dbReference type="ChEBI" id="CHEBI:15378"/>
        <dbReference type="ChEBI" id="CHEBI:30864"/>
        <dbReference type="ChEBI" id="CHEBI:32814"/>
        <dbReference type="EC" id="3.5.2.3"/>
    </reaction>
</comment>
<comment type="cofactor">
    <cofactor evidence="1">
        <name>Zn(2+)</name>
        <dbReference type="ChEBI" id="CHEBI:29105"/>
    </cofactor>
    <text evidence="1">Binds 2 Zn(2+) ions per subunit.</text>
</comment>
<comment type="pathway">
    <text evidence="1">Pyrimidine metabolism; UMP biosynthesis via de novo pathway; (S)-dihydroorotate from bicarbonate: step 3/3.</text>
</comment>
<comment type="similarity">
    <text evidence="1">Belongs to the metallo-dependent hydrolases superfamily. DHOase family. Class I DHOase subfamily.</text>
</comment>
<name>PYRC_SULTO</name>
<protein>
    <recommendedName>
        <fullName evidence="1">Dihydroorotase</fullName>
        <shortName evidence="1">DHOase</shortName>
        <ecNumber evidence="1">3.5.2.3</ecNumber>
    </recommendedName>
</protein>
<keyword id="KW-0378">Hydrolase</keyword>
<keyword id="KW-0479">Metal-binding</keyword>
<keyword id="KW-0665">Pyrimidine biosynthesis</keyword>
<keyword id="KW-1185">Reference proteome</keyword>
<keyword id="KW-0862">Zinc</keyword>
<dbReference type="EC" id="3.5.2.3" evidence="1"/>
<dbReference type="EMBL" id="BA000023">
    <property type="protein sequence ID" value="BAK54596.1"/>
    <property type="molecule type" value="Genomic_DNA"/>
</dbReference>
<dbReference type="RefSeq" id="WP_052846578.1">
    <property type="nucleotide sequence ID" value="NC_003106.2"/>
</dbReference>
<dbReference type="SMR" id="Q970X5"/>
<dbReference type="STRING" id="273063.STK_14780"/>
<dbReference type="GeneID" id="1459512"/>
<dbReference type="KEGG" id="sto:STK_14780"/>
<dbReference type="PATRIC" id="fig|273063.9.peg.1684"/>
<dbReference type="eggNOG" id="arCOG00689">
    <property type="taxonomic scope" value="Archaea"/>
</dbReference>
<dbReference type="OrthoDB" id="8791at2157"/>
<dbReference type="UniPathway" id="UPA00070">
    <property type="reaction ID" value="UER00117"/>
</dbReference>
<dbReference type="Proteomes" id="UP000001015">
    <property type="component" value="Chromosome"/>
</dbReference>
<dbReference type="GO" id="GO:0005737">
    <property type="term" value="C:cytoplasm"/>
    <property type="evidence" value="ECO:0007669"/>
    <property type="project" value="TreeGrafter"/>
</dbReference>
<dbReference type="GO" id="GO:0004038">
    <property type="term" value="F:allantoinase activity"/>
    <property type="evidence" value="ECO:0007669"/>
    <property type="project" value="TreeGrafter"/>
</dbReference>
<dbReference type="GO" id="GO:0004151">
    <property type="term" value="F:dihydroorotase activity"/>
    <property type="evidence" value="ECO:0007669"/>
    <property type="project" value="UniProtKB-UniRule"/>
</dbReference>
<dbReference type="GO" id="GO:0008270">
    <property type="term" value="F:zinc ion binding"/>
    <property type="evidence" value="ECO:0007669"/>
    <property type="project" value="UniProtKB-UniRule"/>
</dbReference>
<dbReference type="GO" id="GO:0044205">
    <property type="term" value="P:'de novo' UMP biosynthetic process"/>
    <property type="evidence" value="ECO:0007669"/>
    <property type="project" value="UniProtKB-UniRule"/>
</dbReference>
<dbReference type="GO" id="GO:0006145">
    <property type="term" value="P:purine nucleobase catabolic process"/>
    <property type="evidence" value="ECO:0007669"/>
    <property type="project" value="TreeGrafter"/>
</dbReference>
<dbReference type="Gene3D" id="3.20.20.140">
    <property type="entry name" value="Metal-dependent hydrolases"/>
    <property type="match status" value="1"/>
</dbReference>
<dbReference type="HAMAP" id="MF_00220_A">
    <property type="entry name" value="PyrC_classI_A"/>
    <property type="match status" value="1"/>
</dbReference>
<dbReference type="InterPro" id="IPR006680">
    <property type="entry name" value="Amidohydro-rel"/>
</dbReference>
<dbReference type="InterPro" id="IPR004722">
    <property type="entry name" value="DHOase"/>
</dbReference>
<dbReference type="InterPro" id="IPR050138">
    <property type="entry name" value="DHOase/Allantoinase_Hydrolase"/>
</dbReference>
<dbReference type="InterPro" id="IPR002195">
    <property type="entry name" value="Dihydroorotase_CS"/>
</dbReference>
<dbReference type="InterPro" id="IPR011059">
    <property type="entry name" value="Metal-dep_hydrolase_composite"/>
</dbReference>
<dbReference type="InterPro" id="IPR032466">
    <property type="entry name" value="Metal_Hydrolase"/>
</dbReference>
<dbReference type="NCBIfam" id="NF001541">
    <property type="entry name" value="PRK00369.1"/>
    <property type="match status" value="1"/>
</dbReference>
<dbReference type="PANTHER" id="PTHR43668">
    <property type="entry name" value="ALLANTOINASE"/>
    <property type="match status" value="1"/>
</dbReference>
<dbReference type="PANTHER" id="PTHR43668:SF2">
    <property type="entry name" value="ALLANTOINASE"/>
    <property type="match status" value="1"/>
</dbReference>
<dbReference type="Pfam" id="PF01979">
    <property type="entry name" value="Amidohydro_1"/>
    <property type="match status" value="1"/>
</dbReference>
<dbReference type="SUPFAM" id="SSF51338">
    <property type="entry name" value="Composite domain of metallo-dependent hydrolases"/>
    <property type="match status" value="1"/>
</dbReference>
<dbReference type="SUPFAM" id="SSF51556">
    <property type="entry name" value="Metallo-dependent hydrolases"/>
    <property type="match status" value="1"/>
</dbReference>
<dbReference type="PROSITE" id="PS00482">
    <property type="entry name" value="DIHYDROOROTASE_1"/>
    <property type="match status" value="1"/>
</dbReference>
<dbReference type="PROSITE" id="PS00483">
    <property type="entry name" value="DIHYDROOROTASE_2"/>
    <property type="match status" value="1"/>
</dbReference>
<accession>Q970X5</accession>
<accession>F9VNF0</accession>
<proteinExistence type="inferred from homology"/>
<evidence type="ECO:0000255" key="1">
    <source>
        <dbReference type="HAMAP-Rule" id="MF_00220"/>
    </source>
</evidence>
<gene>
    <name evidence="1" type="primary">pyrC</name>
    <name type="ordered locus">STK_14780</name>
</gene>
<sequence>MWIKGKAWFNNSIDTICIQIDRFIKNIKKDCKPDIEFKENQLILPASIDMHVHVRGAQLSYKETVATATSEAAYGGIGLIIDMPNTLPPVNTYERVIERIREFENYSRTDFGIYSGVTKEIEKIDTLPIAGYKIYPEDLDRTETKVLLEKSKKLKVLHPEIPLALKVPRKLRNIWMEIAALHYVQGNVHVTHITNYETVKIAKELGFSTDITPHHLLVNGERDCITKVNPPIRDYLTRLGLWKALFEVDTVVSDHAPHSKEEKNLNYDLCPPGIAAVSFTTPFIYSLVFKDLLNIERAVNLLSKNPAKILNIPYGEIRIGYVANFTIISKNDWKYRTKFSKVTETPLDNFPLEAKVEFTIVQGKIAFDGKNVLPIRGVNAFDKSSRYPV</sequence>